<comment type="function">
    <text evidence="1">Produces ATP from ADP in the presence of a proton gradient across the membrane. The gamma chain is believed to be important in regulating ATPase activity and the flow of protons through the CF(0) complex.</text>
</comment>
<comment type="subunit">
    <text evidence="1">F-type ATPases have 2 components, CF(1) - the catalytic core - and CF(0) - the membrane proton channel. CF(1) has five subunits: alpha(3), beta(3), gamma(1), delta(1), epsilon(1). CF(0) has three main subunits: a, b and c.</text>
</comment>
<comment type="subcellular location">
    <subcellularLocation>
        <location evidence="1">Cell inner membrane</location>
        <topology evidence="1">Peripheral membrane protein</topology>
    </subcellularLocation>
</comment>
<comment type="similarity">
    <text evidence="1">Belongs to the ATPase gamma chain family.</text>
</comment>
<accession>A1WF57</accession>
<evidence type="ECO:0000255" key="1">
    <source>
        <dbReference type="HAMAP-Rule" id="MF_00815"/>
    </source>
</evidence>
<reference key="1">
    <citation type="submission" date="2006-12" db="EMBL/GenBank/DDBJ databases">
        <title>Complete sequence of chromosome 1 of Verminephrobacter eiseniae EF01-2.</title>
        <authorList>
            <person name="Copeland A."/>
            <person name="Lucas S."/>
            <person name="Lapidus A."/>
            <person name="Barry K."/>
            <person name="Detter J.C."/>
            <person name="Glavina del Rio T."/>
            <person name="Dalin E."/>
            <person name="Tice H."/>
            <person name="Pitluck S."/>
            <person name="Chertkov O."/>
            <person name="Brettin T."/>
            <person name="Bruce D."/>
            <person name="Han C."/>
            <person name="Tapia R."/>
            <person name="Gilna P."/>
            <person name="Schmutz J."/>
            <person name="Larimer F."/>
            <person name="Land M."/>
            <person name="Hauser L."/>
            <person name="Kyrpides N."/>
            <person name="Kim E."/>
            <person name="Stahl D."/>
            <person name="Richardson P."/>
        </authorList>
    </citation>
    <scope>NUCLEOTIDE SEQUENCE [LARGE SCALE GENOMIC DNA]</scope>
    <source>
        <strain>EF01-2</strain>
    </source>
</reference>
<name>ATPG_VEREI</name>
<organism>
    <name type="scientific">Verminephrobacter eiseniae (strain EF01-2)</name>
    <dbReference type="NCBI Taxonomy" id="391735"/>
    <lineage>
        <taxon>Bacteria</taxon>
        <taxon>Pseudomonadati</taxon>
        <taxon>Pseudomonadota</taxon>
        <taxon>Betaproteobacteria</taxon>
        <taxon>Burkholderiales</taxon>
        <taxon>Comamonadaceae</taxon>
        <taxon>Verminephrobacter</taxon>
    </lineage>
</organism>
<keyword id="KW-0066">ATP synthesis</keyword>
<keyword id="KW-0997">Cell inner membrane</keyword>
<keyword id="KW-1003">Cell membrane</keyword>
<keyword id="KW-0139">CF(1)</keyword>
<keyword id="KW-0375">Hydrogen ion transport</keyword>
<keyword id="KW-0406">Ion transport</keyword>
<keyword id="KW-0472">Membrane</keyword>
<keyword id="KW-1185">Reference proteome</keyword>
<keyword id="KW-0813">Transport</keyword>
<dbReference type="EMBL" id="CP000542">
    <property type="protein sequence ID" value="ABM56264.1"/>
    <property type="molecule type" value="Genomic_DNA"/>
</dbReference>
<dbReference type="RefSeq" id="WP_011808280.1">
    <property type="nucleotide sequence ID" value="NC_008786.1"/>
</dbReference>
<dbReference type="SMR" id="A1WF57"/>
<dbReference type="STRING" id="391735.Veis_0479"/>
<dbReference type="GeneID" id="76459189"/>
<dbReference type="KEGG" id="vei:Veis_0479"/>
<dbReference type="eggNOG" id="COG0224">
    <property type="taxonomic scope" value="Bacteria"/>
</dbReference>
<dbReference type="HOGENOM" id="CLU_050669_0_1_4"/>
<dbReference type="OrthoDB" id="9812769at2"/>
<dbReference type="Proteomes" id="UP000000374">
    <property type="component" value="Chromosome"/>
</dbReference>
<dbReference type="GO" id="GO:0005886">
    <property type="term" value="C:plasma membrane"/>
    <property type="evidence" value="ECO:0007669"/>
    <property type="project" value="UniProtKB-SubCell"/>
</dbReference>
<dbReference type="GO" id="GO:0045259">
    <property type="term" value="C:proton-transporting ATP synthase complex"/>
    <property type="evidence" value="ECO:0007669"/>
    <property type="project" value="UniProtKB-KW"/>
</dbReference>
<dbReference type="GO" id="GO:0005524">
    <property type="term" value="F:ATP binding"/>
    <property type="evidence" value="ECO:0007669"/>
    <property type="project" value="UniProtKB-UniRule"/>
</dbReference>
<dbReference type="GO" id="GO:0046933">
    <property type="term" value="F:proton-transporting ATP synthase activity, rotational mechanism"/>
    <property type="evidence" value="ECO:0007669"/>
    <property type="project" value="UniProtKB-UniRule"/>
</dbReference>
<dbReference type="GO" id="GO:0042777">
    <property type="term" value="P:proton motive force-driven plasma membrane ATP synthesis"/>
    <property type="evidence" value="ECO:0007669"/>
    <property type="project" value="UniProtKB-UniRule"/>
</dbReference>
<dbReference type="CDD" id="cd12151">
    <property type="entry name" value="F1-ATPase_gamma"/>
    <property type="match status" value="1"/>
</dbReference>
<dbReference type="FunFam" id="1.10.287.80:FF:000005">
    <property type="entry name" value="ATP synthase gamma chain"/>
    <property type="match status" value="1"/>
</dbReference>
<dbReference type="Gene3D" id="3.40.1380.10">
    <property type="match status" value="1"/>
</dbReference>
<dbReference type="Gene3D" id="1.10.287.80">
    <property type="entry name" value="ATP synthase, gamma subunit, helix hairpin domain"/>
    <property type="match status" value="1"/>
</dbReference>
<dbReference type="HAMAP" id="MF_00815">
    <property type="entry name" value="ATP_synth_gamma_bact"/>
    <property type="match status" value="1"/>
</dbReference>
<dbReference type="InterPro" id="IPR035968">
    <property type="entry name" value="ATP_synth_F1_ATPase_gsu"/>
</dbReference>
<dbReference type="InterPro" id="IPR000131">
    <property type="entry name" value="ATP_synth_F1_gsu"/>
</dbReference>
<dbReference type="InterPro" id="IPR023632">
    <property type="entry name" value="ATP_synth_F1_gsu_CS"/>
</dbReference>
<dbReference type="NCBIfam" id="TIGR01146">
    <property type="entry name" value="ATPsyn_F1gamma"/>
    <property type="match status" value="1"/>
</dbReference>
<dbReference type="NCBIfam" id="NF004144">
    <property type="entry name" value="PRK05621.1-1"/>
    <property type="match status" value="1"/>
</dbReference>
<dbReference type="PANTHER" id="PTHR11693">
    <property type="entry name" value="ATP SYNTHASE GAMMA CHAIN"/>
    <property type="match status" value="1"/>
</dbReference>
<dbReference type="PANTHER" id="PTHR11693:SF22">
    <property type="entry name" value="ATP SYNTHASE SUBUNIT GAMMA, MITOCHONDRIAL"/>
    <property type="match status" value="1"/>
</dbReference>
<dbReference type="Pfam" id="PF00231">
    <property type="entry name" value="ATP-synt"/>
    <property type="match status" value="1"/>
</dbReference>
<dbReference type="PRINTS" id="PR00126">
    <property type="entry name" value="ATPASEGAMMA"/>
</dbReference>
<dbReference type="SUPFAM" id="SSF52943">
    <property type="entry name" value="ATP synthase (F1-ATPase), gamma subunit"/>
    <property type="match status" value="1"/>
</dbReference>
<dbReference type="PROSITE" id="PS00153">
    <property type="entry name" value="ATPASE_GAMMA"/>
    <property type="match status" value="1"/>
</dbReference>
<feature type="chain" id="PRO_1000053373" description="ATP synthase gamma chain">
    <location>
        <begin position="1"/>
        <end position="291"/>
    </location>
</feature>
<proteinExistence type="inferred from homology"/>
<sequence>MAAGKEIRGKIKSVENTKKITKAMEMVSVSKMRKAQERMRAARPYSEKIRNIAANLGKANPEYTHAFMKKNDAKALGFIIVTSDKGLCGGLNTNLLRAVTAKLREAQAAGVAIESVAIGSKGLGFLNRIGARVVAHVTHLGDTPHLDKLIGPVKTLLDAYAEGKLSAVYLSYTKFINTIKQEPLVEQLLPLAEDSLKVEEGQHSWDYIYEPDAQSVIDELLVRYVESLVYQAVAENMASEHSARMVAMKAATDNAGNVISELKLVYNKTRQAGITKELSEIVSGAAAAAGV</sequence>
<protein>
    <recommendedName>
        <fullName evidence="1">ATP synthase gamma chain</fullName>
    </recommendedName>
    <alternativeName>
        <fullName evidence="1">ATP synthase F1 sector gamma subunit</fullName>
    </alternativeName>
    <alternativeName>
        <fullName evidence="1">F-ATPase gamma subunit</fullName>
    </alternativeName>
</protein>
<gene>
    <name evidence="1" type="primary">atpG</name>
    <name type="ordered locus">Veis_0479</name>
</gene>